<feature type="chain" id="PRO_0000135661" description="Pyridoxal 5'-phosphate synthase subunit PdxT">
    <location>
        <begin position="1"/>
        <end position="185"/>
    </location>
</feature>
<feature type="active site" description="Nucleophile" evidence="1">
    <location>
        <position position="75"/>
    </location>
</feature>
<feature type="active site" description="Charge relay system" evidence="1">
    <location>
        <position position="165"/>
    </location>
</feature>
<feature type="active site" description="Charge relay system" evidence="1">
    <location>
        <position position="167"/>
    </location>
</feature>
<feature type="binding site" evidence="1">
    <location>
        <begin position="46"/>
        <end position="48"/>
    </location>
    <ligand>
        <name>L-glutamine</name>
        <dbReference type="ChEBI" id="CHEBI:58359"/>
    </ligand>
</feature>
<feature type="binding site" evidence="1">
    <location>
        <position position="101"/>
    </location>
    <ligand>
        <name>L-glutamine</name>
        <dbReference type="ChEBI" id="CHEBI:58359"/>
    </ligand>
</feature>
<feature type="binding site" evidence="1">
    <location>
        <begin position="129"/>
        <end position="130"/>
    </location>
    <ligand>
        <name>L-glutamine</name>
        <dbReference type="ChEBI" id="CHEBI:58359"/>
    </ligand>
</feature>
<sequence>MKIGVLALQGAVREHIRHIELSGYEGIAIKRVEQLDEIDGLILPGGESTTLRRLMDLYGFKEKLQQLDLPMFGTCAGLIVLAKNVENESGYLNKLDITVERNSFGRQVDSFESELDIKGIANDIEGVFIRAPHIAKVDNGVEILSKVGGKIVAVKQGQYLGVSFHPELTDDYRITKYFIEHMIKH</sequence>
<comment type="function">
    <text evidence="1">Catalyzes the hydrolysis of glutamine to glutamate and ammonia as part of the biosynthesis of pyridoxal 5'-phosphate. The resulting ammonia molecule is channeled to the active site of PdxS.</text>
</comment>
<comment type="catalytic activity">
    <reaction evidence="1">
        <text>aldehydo-D-ribose 5-phosphate + D-glyceraldehyde 3-phosphate + L-glutamine = pyridoxal 5'-phosphate + L-glutamate + phosphate + 3 H2O + H(+)</text>
        <dbReference type="Rhea" id="RHEA:31507"/>
        <dbReference type="ChEBI" id="CHEBI:15377"/>
        <dbReference type="ChEBI" id="CHEBI:15378"/>
        <dbReference type="ChEBI" id="CHEBI:29985"/>
        <dbReference type="ChEBI" id="CHEBI:43474"/>
        <dbReference type="ChEBI" id="CHEBI:58273"/>
        <dbReference type="ChEBI" id="CHEBI:58359"/>
        <dbReference type="ChEBI" id="CHEBI:59776"/>
        <dbReference type="ChEBI" id="CHEBI:597326"/>
        <dbReference type="EC" id="4.3.3.6"/>
    </reaction>
</comment>
<comment type="catalytic activity">
    <reaction evidence="1">
        <text>L-glutamine + H2O = L-glutamate + NH4(+)</text>
        <dbReference type="Rhea" id="RHEA:15889"/>
        <dbReference type="ChEBI" id="CHEBI:15377"/>
        <dbReference type="ChEBI" id="CHEBI:28938"/>
        <dbReference type="ChEBI" id="CHEBI:29985"/>
        <dbReference type="ChEBI" id="CHEBI:58359"/>
        <dbReference type="EC" id="3.5.1.2"/>
    </reaction>
</comment>
<comment type="pathway">
    <text evidence="1">Cofactor biosynthesis; pyridoxal 5'-phosphate biosynthesis.</text>
</comment>
<comment type="subunit">
    <text evidence="1">In the presence of PdxS, forms a dodecamer of heterodimers. Only shows activity in the heterodimer.</text>
</comment>
<comment type="similarity">
    <text evidence="1">Belongs to the glutaminase PdxT/SNO family.</text>
</comment>
<gene>
    <name evidence="1" type="primary">pdxT</name>
    <name type="ordered locus">SE_2261</name>
</gene>
<name>PDXT_STAES</name>
<proteinExistence type="inferred from homology"/>
<evidence type="ECO:0000255" key="1">
    <source>
        <dbReference type="HAMAP-Rule" id="MF_01615"/>
    </source>
</evidence>
<accession>Q8CQV8</accession>
<organism>
    <name type="scientific">Staphylococcus epidermidis (strain ATCC 12228 / FDA PCI 1200)</name>
    <dbReference type="NCBI Taxonomy" id="176280"/>
    <lineage>
        <taxon>Bacteria</taxon>
        <taxon>Bacillati</taxon>
        <taxon>Bacillota</taxon>
        <taxon>Bacilli</taxon>
        <taxon>Bacillales</taxon>
        <taxon>Staphylococcaceae</taxon>
        <taxon>Staphylococcus</taxon>
    </lineage>
</organism>
<protein>
    <recommendedName>
        <fullName evidence="1">Pyridoxal 5'-phosphate synthase subunit PdxT</fullName>
        <ecNumber evidence="1">4.3.3.6</ecNumber>
    </recommendedName>
    <alternativeName>
        <fullName evidence="1">Pdx2</fullName>
    </alternativeName>
    <alternativeName>
        <fullName evidence="1">Pyridoxal 5'-phosphate synthase glutaminase subunit</fullName>
        <ecNumber evidence="1">3.5.1.2</ecNumber>
    </alternativeName>
</protein>
<dbReference type="EC" id="4.3.3.6" evidence="1"/>
<dbReference type="EC" id="3.5.1.2" evidence="1"/>
<dbReference type="EMBL" id="AE015929">
    <property type="protein sequence ID" value="AAO05903.1"/>
    <property type="molecule type" value="Genomic_DNA"/>
</dbReference>
<dbReference type="RefSeq" id="NP_765816.1">
    <property type="nucleotide sequence ID" value="NC_004461.1"/>
</dbReference>
<dbReference type="RefSeq" id="WP_011082818.1">
    <property type="nucleotide sequence ID" value="NZ_WBME01000092.1"/>
</dbReference>
<dbReference type="SMR" id="Q8CQV8"/>
<dbReference type="GeneID" id="50019553"/>
<dbReference type="KEGG" id="sep:SE_2261"/>
<dbReference type="PATRIC" id="fig|176280.10.peg.2206"/>
<dbReference type="eggNOG" id="COG0311">
    <property type="taxonomic scope" value="Bacteria"/>
</dbReference>
<dbReference type="HOGENOM" id="CLU_069674_2_0_9"/>
<dbReference type="OrthoDB" id="9810320at2"/>
<dbReference type="UniPathway" id="UPA00245"/>
<dbReference type="Proteomes" id="UP000001411">
    <property type="component" value="Chromosome"/>
</dbReference>
<dbReference type="GO" id="GO:0005829">
    <property type="term" value="C:cytosol"/>
    <property type="evidence" value="ECO:0007669"/>
    <property type="project" value="TreeGrafter"/>
</dbReference>
<dbReference type="GO" id="GO:1903600">
    <property type="term" value="C:glutaminase complex"/>
    <property type="evidence" value="ECO:0007669"/>
    <property type="project" value="TreeGrafter"/>
</dbReference>
<dbReference type="GO" id="GO:0004359">
    <property type="term" value="F:glutaminase activity"/>
    <property type="evidence" value="ECO:0007669"/>
    <property type="project" value="UniProtKB-UniRule"/>
</dbReference>
<dbReference type="GO" id="GO:0036381">
    <property type="term" value="F:pyridoxal 5'-phosphate synthase (glutamine hydrolysing) activity"/>
    <property type="evidence" value="ECO:0007669"/>
    <property type="project" value="UniProtKB-UniRule"/>
</dbReference>
<dbReference type="GO" id="GO:0006543">
    <property type="term" value="P:glutamine catabolic process"/>
    <property type="evidence" value="ECO:0007669"/>
    <property type="project" value="UniProtKB-UniRule"/>
</dbReference>
<dbReference type="GO" id="GO:0042823">
    <property type="term" value="P:pyridoxal phosphate biosynthetic process"/>
    <property type="evidence" value="ECO:0007669"/>
    <property type="project" value="UniProtKB-UniRule"/>
</dbReference>
<dbReference type="GO" id="GO:0008614">
    <property type="term" value="P:pyridoxine metabolic process"/>
    <property type="evidence" value="ECO:0007669"/>
    <property type="project" value="TreeGrafter"/>
</dbReference>
<dbReference type="CDD" id="cd01749">
    <property type="entry name" value="GATase1_PB"/>
    <property type="match status" value="1"/>
</dbReference>
<dbReference type="FunFam" id="3.40.50.880:FF:000010">
    <property type="entry name" value="uncharacterized protein LOC100176842 isoform X2"/>
    <property type="match status" value="1"/>
</dbReference>
<dbReference type="Gene3D" id="3.40.50.880">
    <property type="match status" value="1"/>
</dbReference>
<dbReference type="HAMAP" id="MF_01615">
    <property type="entry name" value="PdxT"/>
    <property type="match status" value="1"/>
</dbReference>
<dbReference type="InterPro" id="IPR029062">
    <property type="entry name" value="Class_I_gatase-like"/>
</dbReference>
<dbReference type="InterPro" id="IPR002161">
    <property type="entry name" value="PdxT/SNO"/>
</dbReference>
<dbReference type="InterPro" id="IPR021196">
    <property type="entry name" value="PdxT/SNO_CS"/>
</dbReference>
<dbReference type="NCBIfam" id="TIGR03800">
    <property type="entry name" value="PLP_synth_Pdx2"/>
    <property type="match status" value="1"/>
</dbReference>
<dbReference type="PANTHER" id="PTHR31559">
    <property type="entry name" value="PYRIDOXAL 5'-PHOSPHATE SYNTHASE SUBUNIT SNO"/>
    <property type="match status" value="1"/>
</dbReference>
<dbReference type="PANTHER" id="PTHR31559:SF0">
    <property type="entry name" value="PYRIDOXAL 5'-PHOSPHATE SYNTHASE SUBUNIT SNO1-RELATED"/>
    <property type="match status" value="1"/>
</dbReference>
<dbReference type="Pfam" id="PF01174">
    <property type="entry name" value="SNO"/>
    <property type="match status" value="1"/>
</dbReference>
<dbReference type="PIRSF" id="PIRSF005639">
    <property type="entry name" value="Glut_amidoT_SNO"/>
    <property type="match status" value="1"/>
</dbReference>
<dbReference type="SUPFAM" id="SSF52317">
    <property type="entry name" value="Class I glutamine amidotransferase-like"/>
    <property type="match status" value="1"/>
</dbReference>
<dbReference type="PROSITE" id="PS01236">
    <property type="entry name" value="PDXT_SNO_1"/>
    <property type="match status" value="1"/>
</dbReference>
<dbReference type="PROSITE" id="PS51130">
    <property type="entry name" value="PDXT_SNO_2"/>
    <property type="match status" value="1"/>
</dbReference>
<keyword id="KW-0315">Glutamine amidotransferase</keyword>
<keyword id="KW-0378">Hydrolase</keyword>
<keyword id="KW-0456">Lyase</keyword>
<keyword id="KW-0663">Pyridoxal phosphate</keyword>
<reference key="1">
    <citation type="journal article" date="2003" name="Mol. Microbiol.">
        <title>Genome-based analysis of virulence genes in a non-biofilm-forming Staphylococcus epidermidis strain (ATCC 12228).</title>
        <authorList>
            <person name="Zhang Y.-Q."/>
            <person name="Ren S.-X."/>
            <person name="Li H.-L."/>
            <person name="Wang Y.-X."/>
            <person name="Fu G."/>
            <person name="Yang J."/>
            <person name="Qin Z.-Q."/>
            <person name="Miao Y.-G."/>
            <person name="Wang W.-Y."/>
            <person name="Chen R.-S."/>
            <person name="Shen Y."/>
            <person name="Chen Z."/>
            <person name="Yuan Z.-H."/>
            <person name="Zhao G.-P."/>
            <person name="Qu D."/>
            <person name="Danchin A."/>
            <person name="Wen Y.-M."/>
        </authorList>
    </citation>
    <scope>NUCLEOTIDE SEQUENCE [LARGE SCALE GENOMIC DNA]</scope>
    <source>
        <strain>ATCC 12228 / FDA PCI 1200</strain>
    </source>
</reference>